<accession>P43005</accession>
<accession>O75587</accession>
<accession>Q5VZ24</accession>
<accession>Q8N199</accession>
<accession>Q9UEW2</accession>
<protein>
    <recommendedName>
        <fullName evidence="16">Excitatory amino acid transporter 3</fullName>
    </recommendedName>
    <alternativeName>
        <fullName>Excitatory amino-acid carrier 1</fullName>
    </alternativeName>
    <alternativeName>
        <fullName>Neuronal and epithelial glutamate transporter</fullName>
    </alternativeName>
    <alternativeName>
        <fullName>Sodium-dependent glutamate/aspartate transporter 3</fullName>
    </alternativeName>
    <alternativeName>
        <fullName>Solute carrier family 1 member 1</fullName>
    </alternativeName>
</protein>
<dbReference type="EMBL" id="U08989">
    <property type="protein sequence ID" value="AAA68628.1"/>
    <property type="molecule type" value="mRNA"/>
</dbReference>
<dbReference type="EMBL" id="U06469">
    <property type="protein sequence ID" value="AAA53215.1"/>
    <property type="molecule type" value="mRNA"/>
</dbReference>
<dbReference type="EMBL" id="U03506">
    <property type="protein sequence ID" value="AAA50430.1"/>
    <property type="molecule type" value="mRNA"/>
</dbReference>
<dbReference type="EMBL" id="AF074911">
    <property type="protein sequence ID" value="AAC27511.3"/>
    <property type="molecule type" value="Genomic_DNA"/>
</dbReference>
<dbReference type="EMBL" id="AF143773">
    <property type="protein sequence ID" value="AAC27511.3"/>
    <property type="status" value="JOINED"/>
    <property type="molecule type" value="Genomic_DNA"/>
</dbReference>
<dbReference type="EMBL" id="AF074903">
    <property type="protein sequence ID" value="AAC27511.3"/>
    <property type="status" value="JOINED"/>
    <property type="molecule type" value="Genomic_DNA"/>
</dbReference>
<dbReference type="EMBL" id="AF074904">
    <property type="protein sequence ID" value="AAC27511.3"/>
    <property type="status" value="JOINED"/>
    <property type="molecule type" value="Genomic_DNA"/>
</dbReference>
<dbReference type="EMBL" id="AF074905">
    <property type="protein sequence ID" value="AAC27511.3"/>
    <property type="status" value="JOINED"/>
    <property type="molecule type" value="Genomic_DNA"/>
</dbReference>
<dbReference type="EMBL" id="AF074906">
    <property type="protein sequence ID" value="AAC27511.3"/>
    <property type="status" value="JOINED"/>
    <property type="molecule type" value="Genomic_DNA"/>
</dbReference>
<dbReference type="EMBL" id="AF074907">
    <property type="protein sequence ID" value="AAC27511.3"/>
    <property type="status" value="JOINED"/>
    <property type="molecule type" value="Genomic_DNA"/>
</dbReference>
<dbReference type="EMBL" id="AF074908">
    <property type="protein sequence ID" value="AAC27511.3"/>
    <property type="status" value="JOINED"/>
    <property type="molecule type" value="Genomic_DNA"/>
</dbReference>
<dbReference type="EMBL" id="AF074909">
    <property type="protein sequence ID" value="AAC27511.3"/>
    <property type="status" value="JOINED"/>
    <property type="molecule type" value="Genomic_DNA"/>
</dbReference>
<dbReference type="EMBL" id="AF074910">
    <property type="protein sequence ID" value="AAC27511.3"/>
    <property type="status" value="JOINED"/>
    <property type="molecule type" value="Genomic_DNA"/>
</dbReference>
<dbReference type="EMBL" id="AB008536">
    <property type="protein sequence ID" value="BAB83767.1"/>
    <property type="molecule type" value="mRNA"/>
</dbReference>
<dbReference type="EMBL" id="AL162587">
    <property type="status" value="NOT_ANNOTATED_CDS"/>
    <property type="molecule type" value="Genomic_DNA"/>
</dbReference>
<dbReference type="EMBL" id="AL136231">
    <property type="status" value="NOT_ANNOTATED_CDS"/>
    <property type="molecule type" value="Genomic_DNA"/>
</dbReference>
<dbReference type="EMBL" id="BC033040">
    <property type="protein sequence ID" value="AAH33040.1"/>
    <property type="molecule type" value="mRNA"/>
</dbReference>
<dbReference type="EMBL" id="AF037982">
    <property type="protein sequence ID" value="AAC25029.1"/>
    <property type="molecule type" value="mRNA"/>
</dbReference>
<dbReference type="CCDS" id="CCDS6452.1"/>
<dbReference type="PIR" id="A54856">
    <property type="entry name" value="A54856"/>
</dbReference>
<dbReference type="PIR" id="I38433">
    <property type="entry name" value="I38433"/>
</dbReference>
<dbReference type="PIR" id="I38560">
    <property type="entry name" value="I38560"/>
</dbReference>
<dbReference type="RefSeq" id="NP_004161.4">
    <property type="nucleotide sequence ID" value="NM_004170.5"/>
</dbReference>
<dbReference type="PDB" id="6S3Q">
    <property type="method" value="EM"/>
    <property type="resolution" value="3.34 A"/>
    <property type="chains" value="A/B/C=1-480"/>
</dbReference>
<dbReference type="PDB" id="6X2L">
    <property type="method" value="EM"/>
    <property type="resolution" value="2.85 A"/>
    <property type="chains" value="A/B/C=1-524"/>
</dbReference>
<dbReference type="PDB" id="6X2Z">
    <property type="method" value="EM"/>
    <property type="resolution" value="3.03 A"/>
    <property type="chains" value="A=1-524"/>
</dbReference>
<dbReference type="PDB" id="6X3E">
    <property type="method" value="EM"/>
    <property type="resolution" value="3.42 A"/>
    <property type="chains" value="A/B/C=1-524"/>
</dbReference>
<dbReference type="PDB" id="6X3F">
    <property type="method" value="EM"/>
    <property type="resolution" value="3.03 A"/>
    <property type="chains" value="A/B/C=1-524"/>
</dbReference>
<dbReference type="PDB" id="7NSG">
    <property type="method" value="EM"/>
    <property type="resolution" value="3.34 A"/>
    <property type="chains" value="A/B/C=1-480"/>
</dbReference>
<dbReference type="PDB" id="8CTC">
    <property type="method" value="EM"/>
    <property type="resolution" value="2.80 A"/>
    <property type="chains" value="A/B/C=1-524"/>
</dbReference>
<dbReference type="PDB" id="8CTD">
    <property type="method" value="EM"/>
    <property type="resolution" value="3.42 A"/>
    <property type="chains" value="A=1-524"/>
</dbReference>
<dbReference type="PDB" id="8CUA">
    <property type="method" value="EM"/>
    <property type="resolution" value="2.44 A"/>
    <property type="chains" value="A/B/C=1-524"/>
</dbReference>
<dbReference type="PDB" id="8CUD">
    <property type="method" value="EM"/>
    <property type="resolution" value="2.94 A"/>
    <property type="chains" value="A=1-524"/>
</dbReference>
<dbReference type="PDB" id="8CUI">
    <property type="method" value="EM"/>
    <property type="resolution" value="2.55 A"/>
    <property type="chains" value="A/B/C=1-524"/>
</dbReference>
<dbReference type="PDB" id="8CUJ">
    <property type="method" value="EM"/>
    <property type="resolution" value="3.04 A"/>
    <property type="chains" value="A=1-524"/>
</dbReference>
<dbReference type="PDB" id="8CV2">
    <property type="method" value="EM"/>
    <property type="resolution" value="2.44 A"/>
    <property type="chains" value="A/B/C=1-524"/>
</dbReference>
<dbReference type="PDB" id="8CV3">
    <property type="method" value="EM"/>
    <property type="resolution" value="3.04 A"/>
    <property type="chains" value="A=1-524"/>
</dbReference>
<dbReference type="PDB" id="9D66">
    <property type="method" value="EM"/>
    <property type="resolution" value="2.98 A"/>
    <property type="chains" value="A/B/C=1-524"/>
</dbReference>
<dbReference type="PDB" id="9D67">
    <property type="method" value="EM"/>
    <property type="resolution" value="2.87 A"/>
    <property type="chains" value="A/B/C=1-524"/>
</dbReference>
<dbReference type="PDB" id="9D68">
    <property type="method" value="EM"/>
    <property type="resolution" value="2.58 A"/>
    <property type="chains" value="A=1-524"/>
</dbReference>
<dbReference type="PDB" id="9D69">
    <property type="method" value="EM"/>
    <property type="resolution" value="2.99 A"/>
    <property type="chains" value="A=1-524"/>
</dbReference>
<dbReference type="PDB" id="9D6A">
    <property type="method" value="EM"/>
    <property type="resolution" value="2.60 A"/>
    <property type="chains" value="A=1-524"/>
</dbReference>
<dbReference type="PDBsum" id="6S3Q"/>
<dbReference type="PDBsum" id="6X2L"/>
<dbReference type="PDBsum" id="6X2Z"/>
<dbReference type="PDBsum" id="6X3E"/>
<dbReference type="PDBsum" id="6X3F"/>
<dbReference type="PDBsum" id="7NSG"/>
<dbReference type="PDBsum" id="8CTC"/>
<dbReference type="PDBsum" id="8CTD"/>
<dbReference type="PDBsum" id="8CUA"/>
<dbReference type="PDBsum" id="8CUD"/>
<dbReference type="PDBsum" id="8CUI"/>
<dbReference type="PDBsum" id="8CUJ"/>
<dbReference type="PDBsum" id="8CV2"/>
<dbReference type="PDBsum" id="8CV3"/>
<dbReference type="PDBsum" id="9D66"/>
<dbReference type="PDBsum" id="9D67"/>
<dbReference type="PDBsum" id="9D68"/>
<dbReference type="PDBsum" id="9D69"/>
<dbReference type="PDBsum" id="9D6A"/>
<dbReference type="EMDB" id="EMD-10094"/>
<dbReference type="EMDB" id="EMD-12566"/>
<dbReference type="EMDB" id="EMD-22011"/>
<dbReference type="EMDB" id="EMD-22014"/>
<dbReference type="EMDB" id="EMD-22020"/>
<dbReference type="EMDB" id="EMD-22021"/>
<dbReference type="EMDB" id="EMD-26985"/>
<dbReference type="EMDB" id="EMD-26986"/>
<dbReference type="EMDB" id="EMD-26997"/>
<dbReference type="EMDB" id="EMD-26998"/>
<dbReference type="EMDB" id="EMD-27000"/>
<dbReference type="EMDB" id="EMD-27001"/>
<dbReference type="EMDB" id="EMD-27006"/>
<dbReference type="EMDB" id="EMD-27007"/>
<dbReference type="EMDB" id="EMD-46586"/>
<dbReference type="EMDB" id="EMD-46588"/>
<dbReference type="EMDB" id="EMD-46589"/>
<dbReference type="EMDB" id="EMD-46590"/>
<dbReference type="EMDB" id="EMD-46591"/>
<dbReference type="SMR" id="P43005"/>
<dbReference type="BioGRID" id="112396">
    <property type="interactions" value="199"/>
</dbReference>
<dbReference type="FunCoup" id="P43005">
    <property type="interactions" value="451"/>
</dbReference>
<dbReference type="IntAct" id="P43005">
    <property type="interactions" value="159"/>
</dbReference>
<dbReference type="STRING" id="9606.ENSP00000262352"/>
<dbReference type="BindingDB" id="P43005"/>
<dbReference type="ChEMBL" id="CHEMBL2721"/>
<dbReference type="DrugBank" id="DB00128">
    <property type="generic name" value="Aspartic acid"/>
</dbReference>
<dbReference type="DrugBank" id="DB00142">
    <property type="generic name" value="Glutamic acid"/>
</dbReference>
<dbReference type="DrugBank" id="DB00230">
    <property type="generic name" value="Pregabalin"/>
</dbReference>
<dbReference type="DrugCentral" id="P43005"/>
<dbReference type="GuidetoPHARMACOLOGY" id="870"/>
<dbReference type="TCDB" id="2.A.23.2.3">
    <property type="family name" value="the dicarboxylate/amino acid:cation (na(+) or h(+)) symporter (daacs) family"/>
</dbReference>
<dbReference type="GlyCosmos" id="P43005">
    <property type="glycosylation" value="4 sites, 1 glycan"/>
</dbReference>
<dbReference type="GlyGen" id="P43005">
    <property type="glycosylation" value="4 sites, 1 O-linked glycan (1 site)"/>
</dbReference>
<dbReference type="iPTMnet" id="P43005"/>
<dbReference type="PhosphoSitePlus" id="P43005"/>
<dbReference type="SwissPalm" id="P43005"/>
<dbReference type="BioMuta" id="SLC1A1"/>
<dbReference type="DMDM" id="1352332"/>
<dbReference type="jPOST" id="P43005"/>
<dbReference type="MassIVE" id="P43005"/>
<dbReference type="PaxDb" id="9606-ENSP00000262352"/>
<dbReference type="PeptideAtlas" id="P43005"/>
<dbReference type="ProteomicsDB" id="55571"/>
<dbReference type="Pumba" id="P43005"/>
<dbReference type="ABCD" id="P43005">
    <property type="antibodies" value="1 sequenced antibody"/>
</dbReference>
<dbReference type="Antibodypedia" id="3650">
    <property type="antibodies" value="358 antibodies from 37 providers"/>
</dbReference>
<dbReference type="DNASU" id="6505"/>
<dbReference type="Ensembl" id="ENST00000262352.8">
    <property type="protein sequence ID" value="ENSP00000262352.3"/>
    <property type="gene ID" value="ENSG00000106688.12"/>
</dbReference>
<dbReference type="GeneID" id="6505"/>
<dbReference type="KEGG" id="hsa:6505"/>
<dbReference type="MANE-Select" id="ENST00000262352.8">
    <property type="protein sequence ID" value="ENSP00000262352.3"/>
    <property type="RefSeq nucleotide sequence ID" value="NM_004170.6"/>
    <property type="RefSeq protein sequence ID" value="NP_004161.4"/>
</dbReference>
<dbReference type="UCSC" id="uc003zij.3">
    <property type="organism name" value="human"/>
</dbReference>
<dbReference type="AGR" id="HGNC:10939"/>
<dbReference type="CTD" id="6505"/>
<dbReference type="DisGeNET" id="6505"/>
<dbReference type="GeneCards" id="SLC1A1"/>
<dbReference type="HGNC" id="HGNC:10939">
    <property type="gene designation" value="SLC1A1"/>
</dbReference>
<dbReference type="HPA" id="ENSG00000106688">
    <property type="expression patterns" value="Tissue enhanced (epididymis, intestine, kidney)"/>
</dbReference>
<dbReference type="MalaCards" id="SLC1A1"/>
<dbReference type="MIM" id="133550">
    <property type="type" value="gene"/>
</dbReference>
<dbReference type="MIM" id="222730">
    <property type="type" value="phenotype"/>
</dbReference>
<dbReference type="MIM" id="615232">
    <property type="type" value="phenotype"/>
</dbReference>
<dbReference type="neXtProt" id="NX_P43005"/>
<dbReference type="OpenTargets" id="ENSG00000106688"/>
<dbReference type="Orphanet" id="2195">
    <property type="disease" value="Dicarboxylic aminoaciduria"/>
</dbReference>
<dbReference type="Orphanet" id="166412">
    <property type="disease" value="Hot water reflex epilepsy"/>
</dbReference>
<dbReference type="PharmGKB" id="PA35826"/>
<dbReference type="VEuPathDB" id="HostDB:ENSG00000106688"/>
<dbReference type="eggNOG" id="KOG3787">
    <property type="taxonomic scope" value="Eukaryota"/>
</dbReference>
<dbReference type="GeneTree" id="ENSGT00940000155397"/>
<dbReference type="HOGENOM" id="CLU_019375_3_2_1"/>
<dbReference type="InParanoid" id="P43005"/>
<dbReference type="OMA" id="ICSFVVP"/>
<dbReference type="OrthoDB" id="5877963at2759"/>
<dbReference type="PAN-GO" id="P43005">
    <property type="GO annotations" value="6 GO annotations based on evolutionary models"/>
</dbReference>
<dbReference type="PhylomeDB" id="P43005"/>
<dbReference type="TreeFam" id="TF315206"/>
<dbReference type="PathwayCommons" id="P43005"/>
<dbReference type="Reactome" id="R-HSA-210500">
    <property type="pathway name" value="Glutamate Neurotransmitter Release Cycle"/>
</dbReference>
<dbReference type="Reactome" id="R-HSA-425393">
    <property type="pathway name" value="Transport of inorganic cations/anions and amino acids/oligopeptides"/>
</dbReference>
<dbReference type="Reactome" id="R-HSA-5619067">
    <property type="pathway name" value="Defective SLC1A1 is implicated in schizophrenia 18 (SCZD18) and dicarboxylic aminoaciduria (DCBXA)"/>
</dbReference>
<dbReference type="SignaLink" id="P43005"/>
<dbReference type="SIGNOR" id="P43005"/>
<dbReference type="BioGRID-ORCS" id="6505">
    <property type="hits" value="13 hits in 1159 CRISPR screens"/>
</dbReference>
<dbReference type="ChiTaRS" id="SLC1A1">
    <property type="organism name" value="human"/>
</dbReference>
<dbReference type="GeneWiki" id="SLC1A1"/>
<dbReference type="GenomeRNAi" id="6505"/>
<dbReference type="Pharos" id="P43005">
    <property type="development level" value="Tchem"/>
</dbReference>
<dbReference type="PRO" id="PR:P43005"/>
<dbReference type="Proteomes" id="UP000005640">
    <property type="component" value="Chromosome 9"/>
</dbReference>
<dbReference type="RNAct" id="P43005">
    <property type="molecule type" value="protein"/>
</dbReference>
<dbReference type="Bgee" id="ENSG00000106688">
    <property type="expression patterns" value="Expressed in corpus epididymis and 168 other cell types or tissues"/>
</dbReference>
<dbReference type="ExpressionAtlas" id="P43005">
    <property type="expression patterns" value="baseline and differential"/>
</dbReference>
<dbReference type="GO" id="GO:0097440">
    <property type="term" value="C:apical dendrite"/>
    <property type="evidence" value="ECO:0000250"/>
    <property type="project" value="ARUK-UCL"/>
</dbReference>
<dbReference type="GO" id="GO:0016324">
    <property type="term" value="C:apical plasma membrane"/>
    <property type="evidence" value="ECO:0000314"/>
    <property type="project" value="UniProtKB"/>
</dbReference>
<dbReference type="GO" id="GO:0032279">
    <property type="term" value="C:asymmetric synapse"/>
    <property type="evidence" value="ECO:0000250"/>
    <property type="project" value="ARUK-UCL"/>
</dbReference>
<dbReference type="GO" id="GO:0030424">
    <property type="term" value="C:axon"/>
    <property type="evidence" value="ECO:0000250"/>
    <property type="project" value="ARUK-UCL"/>
</dbReference>
<dbReference type="GO" id="GO:0043679">
    <property type="term" value="C:axon terminus"/>
    <property type="evidence" value="ECO:0000250"/>
    <property type="project" value="ARUK-UCL"/>
</dbReference>
<dbReference type="GO" id="GO:0071944">
    <property type="term" value="C:cell periphery"/>
    <property type="evidence" value="ECO:0000250"/>
    <property type="project" value="ARUK-UCL"/>
</dbReference>
<dbReference type="GO" id="GO:0009986">
    <property type="term" value="C:cell surface"/>
    <property type="evidence" value="ECO:0007669"/>
    <property type="project" value="Ensembl"/>
</dbReference>
<dbReference type="GO" id="GO:0030425">
    <property type="term" value="C:dendrite"/>
    <property type="evidence" value="ECO:0000250"/>
    <property type="project" value="ARUK-UCL"/>
</dbReference>
<dbReference type="GO" id="GO:0043198">
    <property type="term" value="C:dendritic shaft"/>
    <property type="evidence" value="ECO:0000250"/>
    <property type="project" value="ARUK-UCL"/>
</dbReference>
<dbReference type="GO" id="GO:0043197">
    <property type="term" value="C:dendritic spine"/>
    <property type="evidence" value="ECO:0000250"/>
    <property type="project" value="ARUK-UCL"/>
</dbReference>
<dbReference type="GO" id="GO:0150002">
    <property type="term" value="C:distal dendrite"/>
    <property type="evidence" value="ECO:0000250"/>
    <property type="project" value="ARUK-UCL"/>
</dbReference>
<dbReference type="GO" id="GO:0031901">
    <property type="term" value="C:early endosome membrane"/>
    <property type="evidence" value="ECO:0007669"/>
    <property type="project" value="UniProtKB-SubCell"/>
</dbReference>
<dbReference type="GO" id="GO:0070062">
    <property type="term" value="C:extracellular exosome"/>
    <property type="evidence" value="ECO:0007005"/>
    <property type="project" value="UniProtKB"/>
</dbReference>
<dbReference type="GO" id="GO:0097386">
    <property type="term" value="C:glial cell projection"/>
    <property type="evidence" value="ECO:0000250"/>
    <property type="project" value="ARUK-UCL"/>
</dbReference>
<dbReference type="GO" id="GO:0031902">
    <property type="term" value="C:late endosome membrane"/>
    <property type="evidence" value="ECO:0007669"/>
    <property type="project" value="UniProtKB-SubCell"/>
</dbReference>
<dbReference type="GO" id="GO:0016020">
    <property type="term" value="C:membrane"/>
    <property type="evidence" value="ECO:0000314"/>
    <property type="project" value="ARUK-UCL"/>
</dbReference>
<dbReference type="GO" id="GO:0045121">
    <property type="term" value="C:membrane raft"/>
    <property type="evidence" value="ECO:0007669"/>
    <property type="project" value="Ensembl"/>
</dbReference>
<dbReference type="GO" id="GO:0043025">
    <property type="term" value="C:neuronal cell body"/>
    <property type="evidence" value="ECO:0000250"/>
    <property type="project" value="ARUK-UCL"/>
</dbReference>
<dbReference type="GO" id="GO:0043204">
    <property type="term" value="C:perikaryon"/>
    <property type="evidence" value="ECO:0000250"/>
    <property type="project" value="ARUK-UCL"/>
</dbReference>
<dbReference type="GO" id="GO:0099544">
    <property type="term" value="C:perisynaptic space"/>
    <property type="evidence" value="ECO:0000250"/>
    <property type="project" value="ARUK-UCL"/>
</dbReference>
<dbReference type="GO" id="GO:0005886">
    <property type="term" value="C:plasma membrane"/>
    <property type="evidence" value="ECO:0000314"/>
    <property type="project" value="UniProtKB"/>
</dbReference>
<dbReference type="GO" id="GO:0098793">
    <property type="term" value="C:presynapse"/>
    <property type="evidence" value="ECO:0000250"/>
    <property type="project" value="ARUK-UCL"/>
</dbReference>
<dbReference type="GO" id="GO:1990635">
    <property type="term" value="C:proximal dendrite"/>
    <property type="evidence" value="ECO:0000250"/>
    <property type="project" value="ARUK-UCL"/>
</dbReference>
<dbReference type="GO" id="GO:0055038">
    <property type="term" value="C:recycling endosome membrane"/>
    <property type="evidence" value="ECO:0007669"/>
    <property type="project" value="UniProtKB-SubCell"/>
</dbReference>
<dbReference type="GO" id="GO:0098685">
    <property type="term" value="C:Schaffer collateral - CA1 synapse"/>
    <property type="evidence" value="ECO:0007669"/>
    <property type="project" value="Ensembl"/>
</dbReference>
<dbReference type="GO" id="GO:0043083">
    <property type="term" value="C:synaptic cleft"/>
    <property type="evidence" value="ECO:0000250"/>
    <property type="project" value="ARUK-UCL"/>
</dbReference>
<dbReference type="GO" id="GO:0015108">
    <property type="term" value="F:chloride transmembrane transporter activity"/>
    <property type="evidence" value="ECO:0000315"/>
    <property type="project" value="UniProtKB"/>
</dbReference>
<dbReference type="GO" id="GO:0033229">
    <property type="term" value="F:cysteine transmembrane transporter activity"/>
    <property type="evidence" value="ECO:0000314"/>
    <property type="project" value="UniProtKB"/>
</dbReference>
<dbReference type="GO" id="GO:0140010">
    <property type="term" value="F:D-aspartate transmembrane transporter activity"/>
    <property type="evidence" value="ECO:0000314"/>
    <property type="project" value="ARUK-UCL"/>
</dbReference>
<dbReference type="GO" id="GO:0015501">
    <property type="term" value="F:glutamate:sodium symporter activity"/>
    <property type="evidence" value="ECO:0000314"/>
    <property type="project" value="UniProtKB"/>
</dbReference>
<dbReference type="GO" id="GO:0005314">
    <property type="term" value="F:high-affinity L-glutamate transmembrane transporter activity"/>
    <property type="evidence" value="ECO:0000314"/>
    <property type="project" value="UniProtKB"/>
</dbReference>
<dbReference type="GO" id="GO:0042802">
    <property type="term" value="F:identical protein binding"/>
    <property type="evidence" value="ECO:0007669"/>
    <property type="project" value="Ensembl"/>
</dbReference>
<dbReference type="GO" id="GO:0015183">
    <property type="term" value="F:L-aspartate transmembrane transporter activity"/>
    <property type="evidence" value="ECO:0000314"/>
    <property type="project" value="ARUK-UCL"/>
</dbReference>
<dbReference type="GO" id="GO:0005313">
    <property type="term" value="F:L-glutamate transmembrane transporter activity"/>
    <property type="evidence" value="ECO:0000314"/>
    <property type="project" value="UniProtKB"/>
</dbReference>
<dbReference type="GO" id="GO:0046872">
    <property type="term" value="F:metal ion binding"/>
    <property type="evidence" value="ECO:0007669"/>
    <property type="project" value="UniProtKB-KW"/>
</dbReference>
<dbReference type="GO" id="GO:0005253">
    <property type="term" value="F:monoatomic anion channel activity"/>
    <property type="evidence" value="ECO:0007669"/>
    <property type="project" value="Ensembl"/>
</dbReference>
<dbReference type="GO" id="GO:0030534">
    <property type="term" value="P:adult behavior"/>
    <property type="evidence" value="ECO:0007669"/>
    <property type="project" value="Ensembl"/>
</dbReference>
<dbReference type="GO" id="GO:0001662">
    <property type="term" value="P:behavioral fear response"/>
    <property type="evidence" value="ECO:0007669"/>
    <property type="project" value="Ensembl"/>
</dbReference>
<dbReference type="GO" id="GO:0048514">
    <property type="term" value="P:blood vessel morphogenesis"/>
    <property type="evidence" value="ECO:0000250"/>
    <property type="project" value="ARUK-UCL"/>
</dbReference>
<dbReference type="GO" id="GO:0007420">
    <property type="term" value="P:brain development"/>
    <property type="evidence" value="ECO:0007669"/>
    <property type="project" value="Ensembl"/>
</dbReference>
<dbReference type="GO" id="GO:0071242">
    <property type="term" value="P:cellular response to ammonium ion"/>
    <property type="evidence" value="ECO:0007669"/>
    <property type="project" value="Ensembl"/>
</dbReference>
<dbReference type="GO" id="GO:1903926">
    <property type="term" value="P:cellular response to bisphenol A"/>
    <property type="evidence" value="ECO:0007669"/>
    <property type="project" value="Ensembl"/>
</dbReference>
<dbReference type="GO" id="GO:0071314">
    <property type="term" value="P:cellular response to cocaine"/>
    <property type="evidence" value="ECO:0007669"/>
    <property type="project" value="Ensembl"/>
</dbReference>
<dbReference type="GO" id="GO:0071288">
    <property type="term" value="P:cellular response to mercury ion"/>
    <property type="evidence" value="ECO:0007669"/>
    <property type="project" value="Ensembl"/>
</dbReference>
<dbReference type="GO" id="GO:0034599">
    <property type="term" value="P:cellular response to oxidative stress"/>
    <property type="evidence" value="ECO:0007669"/>
    <property type="project" value="Ensembl"/>
</dbReference>
<dbReference type="GO" id="GO:0007268">
    <property type="term" value="P:chemical synaptic transmission"/>
    <property type="evidence" value="ECO:0000304"/>
    <property type="project" value="ProtInc"/>
</dbReference>
<dbReference type="GO" id="GO:1902476">
    <property type="term" value="P:chloride transmembrane transport"/>
    <property type="evidence" value="ECO:0000315"/>
    <property type="project" value="UniProtKB"/>
</dbReference>
<dbReference type="GO" id="GO:1990708">
    <property type="term" value="P:conditioned place preference"/>
    <property type="evidence" value="ECO:0007669"/>
    <property type="project" value="Ensembl"/>
</dbReference>
<dbReference type="GO" id="GO:0042883">
    <property type="term" value="P:cysteine transport"/>
    <property type="evidence" value="ECO:0000314"/>
    <property type="project" value="UniProtKB"/>
</dbReference>
<dbReference type="GO" id="GO:0019221">
    <property type="term" value="P:cytokine-mediated signaling pathway"/>
    <property type="evidence" value="ECO:0007669"/>
    <property type="project" value="Ensembl"/>
</dbReference>
<dbReference type="GO" id="GO:0070779">
    <property type="term" value="P:D-aspartate import across plasma membrane"/>
    <property type="evidence" value="ECO:0000314"/>
    <property type="project" value="UniProtKB"/>
</dbReference>
<dbReference type="GO" id="GO:0070777">
    <property type="term" value="P:D-aspartate transmembrane transport"/>
    <property type="evidence" value="ECO:0000314"/>
    <property type="project" value="ARUK-UCL"/>
</dbReference>
<dbReference type="GO" id="GO:0042417">
    <property type="term" value="P:dopamine metabolic process"/>
    <property type="evidence" value="ECO:0007669"/>
    <property type="project" value="Ensembl"/>
</dbReference>
<dbReference type="GO" id="GO:0007212">
    <property type="term" value="P:G protein-coupled dopamine receptor signaling pathway"/>
    <property type="evidence" value="ECO:0007669"/>
    <property type="project" value="Ensembl"/>
</dbReference>
<dbReference type="GO" id="GO:0010467">
    <property type="term" value="P:gene expression"/>
    <property type="evidence" value="ECO:0007669"/>
    <property type="project" value="Ensembl"/>
</dbReference>
<dbReference type="GO" id="GO:0007215">
    <property type="term" value="P:glutamate receptor signaling pathway"/>
    <property type="evidence" value="ECO:0007669"/>
    <property type="project" value="Ensembl"/>
</dbReference>
<dbReference type="GO" id="GO:0006750">
    <property type="term" value="P:glutathione biosynthetic process"/>
    <property type="evidence" value="ECO:0007669"/>
    <property type="project" value="Ensembl"/>
</dbReference>
<dbReference type="GO" id="GO:0007625">
    <property type="term" value="P:grooming behavior"/>
    <property type="evidence" value="ECO:0007669"/>
    <property type="project" value="Ensembl"/>
</dbReference>
<dbReference type="GO" id="GO:0060047">
    <property type="term" value="P:heart contraction"/>
    <property type="evidence" value="ECO:0007669"/>
    <property type="project" value="Ensembl"/>
</dbReference>
<dbReference type="GO" id="GO:0090461">
    <property type="term" value="P:intracellular glutamate homeostasis"/>
    <property type="evidence" value="ECO:0007669"/>
    <property type="project" value="Ensembl"/>
</dbReference>
<dbReference type="GO" id="GO:0006882">
    <property type="term" value="P:intracellular zinc ion homeostasis"/>
    <property type="evidence" value="ECO:0007669"/>
    <property type="project" value="Ensembl"/>
</dbReference>
<dbReference type="GO" id="GO:0140009">
    <property type="term" value="P:L-aspartate import across plasma membrane"/>
    <property type="evidence" value="ECO:0000314"/>
    <property type="project" value="UniProtKB"/>
</dbReference>
<dbReference type="GO" id="GO:0070778">
    <property type="term" value="P:L-aspartate transmembrane transport"/>
    <property type="evidence" value="ECO:0000314"/>
    <property type="project" value="ARUK-UCL"/>
</dbReference>
<dbReference type="GO" id="GO:0051938">
    <property type="term" value="P:L-glutamate import"/>
    <property type="evidence" value="ECO:0000314"/>
    <property type="project" value="UniProtKB"/>
</dbReference>
<dbReference type="GO" id="GO:0098712">
    <property type="term" value="P:L-glutamate import across plasma membrane"/>
    <property type="evidence" value="ECO:0000314"/>
    <property type="project" value="UniProtKB"/>
</dbReference>
<dbReference type="GO" id="GO:0015813">
    <property type="term" value="P:L-glutamate transmembrane transport"/>
    <property type="evidence" value="ECO:0000314"/>
    <property type="project" value="UniProtKB"/>
</dbReference>
<dbReference type="GO" id="GO:0007626">
    <property type="term" value="P:locomotory behavior"/>
    <property type="evidence" value="ECO:0007669"/>
    <property type="project" value="Ensembl"/>
</dbReference>
<dbReference type="GO" id="GO:0060291">
    <property type="term" value="P:long-term synaptic potentiation"/>
    <property type="evidence" value="ECO:0007669"/>
    <property type="project" value="Ensembl"/>
</dbReference>
<dbReference type="GO" id="GO:0035633">
    <property type="term" value="P:maintenance of blood-brain barrier"/>
    <property type="evidence" value="ECO:0000250"/>
    <property type="project" value="ARUK-UCL"/>
</dbReference>
<dbReference type="GO" id="GO:0007613">
    <property type="term" value="P:memory"/>
    <property type="evidence" value="ECO:0007669"/>
    <property type="project" value="Ensembl"/>
</dbReference>
<dbReference type="GO" id="GO:0006811">
    <property type="term" value="P:monoatomic ion transport"/>
    <property type="evidence" value="ECO:0000304"/>
    <property type="project" value="Reactome"/>
</dbReference>
<dbReference type="GO" id="GO:0061744">
    <property type="term" value="P:motor behavior"/>
    <property type="evidence" value="ECO:0007669"/>
    <property type="project" value="Ensembl"/>
</dbReference>
<dbReference type="GO" id="GO:0097049">
    <property type="term" value="P:motor neuron apoptotic process"/>
    <property type="evidence" value="ECO:0007669"/>
    <property type="project" value="Ensembl"/>
</dbReference>
<dbReference type="GO" id="GO:0043524">
    <property type="term" value="P:negative regulation of neuron apoptotic process"/>
    <property type="evidence" value="ECO:0007669"/>
    <property type="project" value="Ensembl"/>
</dbReference>
<dbReference type="GO" id="GO:0022008">
    <property type="term" value="P:neurogenesis"/>
    <property type="evidence" value="ECO:0007669"/>
    <property type="project" value="Ensembl"/>
</dbReference>
<dbReference type="GO" id="GO:0098877">
    <property type="term" value="P:neurotransmitter receptor transport to plasma membrane"/>
    <property type="evidence" value="ECO:0007669"/>
    <property type="project" value="Ensembl"/>
</dbReference>
<dbReference type="GO" id="GO:0006836">
    <property type="term" value="P:neurotransmitter transport"/>
    <property type="evidence" value="ECO:0000304"/>
    <property type="project" value="Reactome"/>
</dbReference>
<dbReference type="GO" id="GO:0010460">
    <property type="term" value="P:positive regulation of heart rate"/>
    <property type="evidence" value="ECO:0007669"/>
    <property type="project" value="Ensembl"/>
</dbReference>
<dbReference type="GO" id="GO:0099170">
    <property type="term" value="P:postsynaptic modulation of chemical synaptic transmission"/>
    <property type="evidence" value="ECO:0007669"/>
    <property type="project" value="Ensembl"/>
</dbReference>
<dbReference type="GO" id="GO:0090313">
    <property type="term" value="P:regulation of protein targeting to membrane"/>
    <property type="evidence" value="ECO:0007669"/>
    <property type="project" value="Ensembl"/>
</dbReference>
<dbReference type="GO" id="GO:0001975">
    <property type="term" value="P:response to amphetamine"/>
    <property type="evidence" value="ECO:0007669"/>
    <property type="project" value="Ensembl"/>
</dbReference>
<dbReference type="GO" id="GO:0072347">
    <property type="term" value="P:response to anesthetic"/>
    <property type="evidence" value="ECO:0007669"/>
    <property type="project" value="Ensembl"/>
</dbReference>
<dbReference type="GO" id="GO:0048678">
    <property type="term" value="P:response to axon injury"/>
    <property type="evidence" value="ECO:0007669"/>
    <property type="project" value="Ensembl"/>
</dbReference>
<dbReference type="GO" id="GO:0036293">
    <property type="term" value="P:response to decreased oxygen levels"/>
    <property type="evidence" value="ECO:0007669"/>
    <property type="project" value="Ensembl"/>
</dbReference>
<dbReference type="GO" id="GO:0043278">
    <property type="term" value="P:response to morphine"/>
    <property type="evidence" value="ECO:0007669"/>
    <property type="project" value="Ensembl"/>
</dbReference>
<dbReference type="GO" id="GO:0009410">
    <property type="term" value="P:response to xenobiotic stimulus"/>
    <property type="evidence" value="ECO:0007669"/>
    <property type="project" value="Ensembl"/>
</dbReference>
<dbReference type="GO" id="GO:0010842">
    <property type="term" value="P:retina layer formation"/>
    <property type="evidence" value="ECO:0007669"/>
    <property type="project" value="Ensembl"/>
</dbReference>
<dbReference type="GO" id="GO:0060013">
    <property type="term" value="P:righting reflex"/>
    <property type="evidence" value="ECO:0007669"/>
    <property type="project" value="Ensembl"/>
</dbReference>
<dbReference type="GO" id="GO:0006801">
    <property type="term" value="P:superoxide metabolic process"/>
    <property type="evidence" value="ECO:0007669"/>
    <property type="project" value="Ensembl"/>
</dbReference>
<dbReference type="GO" id="GO:0050808">
    <property type="term" value="P:synapse organization"/>
    <property type="evidence" value="ECO:0007669"/>
    <property type="project" value="Ensembl"/>
</dbReference>
<dbReference type="GO" id="GO:0070633">
    <property type="term" value="P:transepithelial transport"/>
    <property type="evidence" value="ECO:0000250"/>
    <property type="project" value="ARUK-UCL"/>
</dbReference>
<dbReference type="GO" id="GO:0150104">
    <property type="term" value="P:transport across blood-brain barrier"/>
    <property type="evidence" value="ECO:0000250"/>
    <property type="project" value="ARUK-UCL"/>
</dbReference>
<dbReference type="GO" id="GO:0071577">
    <property type="term" value="P:zinc ion transmembrane transport"/>
    <property type="evidence" value="ECO:0007669"/>
    <property type="project" value="Ensembl"/>
</dbReference>
<dbReference type="FunFam" id="1.10.3860.10:FF:000002">
    <property type="entry name" value="Amino acid transporter"/>
    <property type="match status" value="1"/>
</dbReference>
<dbReference type="Gene3D" id="1.10.3860.10">
    <property type="entry name" value="Sodium:dicarboxylate symporter"/>
    <property type="match status" value="1"/>
</dbReference>
<dbReference type="InterPro" id="IPR050746">
    <property type="entry name" value="DAACS"/>
</dbReference>
<dbReference type="InterPro" id="IPR001991">
    <property type="entry name" value="Na-dicarboxylate_symporter"/>
</dbReference>
<dbReference type="InterPro" id="IPR018107">
    <property type="entry name" value="Na-dicarboxylate_symporter_CS"/>
</dbReference>
<dbReference type="InterPro" id="IPR036458">
    <property type="entry name" value="Na:dicarbo_symporter_sf"/>
</dbReference>
<dbReference type="PANTHER" id="PTHR11958:SF109">
    <property type="entry name" value="EXCITATORY AMINO ACID TRANSPORTER 3"/>
    <property type="match status" value="1"/>
</dbReference>
<dbReference type="PANTHER" id="PTHR11958">
    <property type="entry name" value="SODIUM/DICARBOXYLATE SYMPORTER-RELATED"/>
    <property type="match status" value="1"/>
</dbReference>
<dbReference type="Pfam" id="PF00375">
    <property type="entry name" value="SDF"/>
    <property type="match status" value="1"/>
</dbReference>
<dbReference type="PRINTS" id="PR00173">
    <property type="entry name" value="EDTRNSPORT"/>
</dbReference>
<dbReference type="SUPFAM" id="SSF118215">
    <property type="entry name" value="Proton glutamate symport protein"/>
    <property type="match status" value="1"/>
</dbReference>
<dbReference type="PROSITE" id="PS00713">
    <property type="entry name" value="NA_DICARBOXYL_SYMP_1"/>
    <property type="match status" value="1"/>
</dbReference>
<dbReference type="PROSITE" id="PS00714">
    <property type="entry name" value="NA_DICARBOXYL_SYMP_2"/>
    <property type="match status" value="1"/>
</dbReference>
<sequence length="524" mass="57100">MGKPARKGCEWKRFLKNNWVLLSTVAAVVLGITTGVLVREHSNLSTLEKFYFAFPGEILMRMLKLIILPLIISSMITGVAALDSNVSGKIGLRAVVYYFCTTLIAVILGIVLVVSIKPGVTQKVGEIARTGSTPEVSTVDAMLDLIRNMFPENLVQACFQQYKTKREEVKPPSDPEMNMTEESFTAVMTTAISKNKTKEYKIVGMYSDGINVLGLIVFCLVFGLVIGKMGEKGQILVDFFNALSDATMKIVQIIMCYMPLGILFLIAGKIIEVEDWEIFRKLGLYMATVLTGLAIHSIVILPLIYFIVVRKNPFRFAMGMAQALLTALMISSSSATLPVTFRCAEENNQVDKRITRFVLPVGATINMDGTALYEAVAAVFIAQLNDLDLGIGQIITISITATSASIGAAGVPQAGLVTMVIVLSAVGLPAEDVTLIIAVDWLLDRFRTMVNVLGDAFGTGIVEKLSKKELEQMDVSSEVNIVNPFALESTILDNEDSDTKKSYVNGGFAVDKSDTISFTQTSQF</sequence>
<evidence type="ECO:0000250" key="1">
    <source>
        <dbReference type="UniProtKB" id="P43003"/>
    </source>
</evidence>
<evidence type="ECO:0000250" key="2">
    <source>
        <dbReference type="UniProtKB" id="P51906"/>
    </source>
</evidence>
<evidence type="ECO:0000250" key="3">
    <source>
        <dbReference type="UniProtKB" id="P51907"/>
    </source>
</evidence>
<evidence type="ECO:0000255" key="4"/>
<evidence type="ECO:0000269" key="5">
    <source>
    </source>
</evidence>
<evidence type="ECO:0000269" key="6">
    <source>
    </source>
</evidence>
<evidence type="ECO:0000269" key="7">
    <source>
    </source>
</evidence>
<evidence type="ECO:0000269" key="8">
    <source>
    </source>
</evidence>
<evidence type="ECO:0000269" key="9">
    <source>
    </source>
</evidence>
<evidence type="ECO:0000269" key="10">
    <source>
    </source>
</evidence>
<evidence type="ECO:0000269" key="11">
    <source>
    </source>
</evidence>
<evidence type="ECO:0000269" key="12">
    <source>
    </source>
</evidence>
<evidence type="ECO:0000269" key="13">
    <source>
    </source>
</evidence>
<evidence type="ECO:0000303" key="14">
    <source>
    </source>
</evidence>
<evidence type="ECO:0000303" key="15">
    <source>
    </source>
</evidence>
<evidence type="ECO:0000305" key="16"/>
<evidence type="ECO:0000312" key="17">
    <source>
        <dbReference type="HGNC" id="HGNC:10939"/>
    </source>
</evidence>
<evidence type="ECO:0007744" key="18">
    <source>
        <dbReference type="PDB" id="6X2L"/>
    </source>
</evidence>
<evidence type="ECO:0007744" key="19">
    <source>
        <dbReference type="PDB" id="6X2Z"/>
    </source>
</evidence>
<evidence type="ECO:0007744" key="20">
    <source>
        <dbReference type="PDB" id="6X3E"/>
    </source>
</evidence>
<evidence type="ECO:0007744" key="21">
    <source>
        <dbReference type="PDB" id="6X3F"/>
    </source>
</evidence>
<evidence type="ECO:0007829" key="22">
    <source>
        <dbReference type="PDB" id="6S3Q"/>
    </source>
</evidence>
<evidence type="ECO:0007829" key="23">
    <source>
        <dbReference type="PDB" id="8CTD"/>
    </source>
</evidence>
<evidence type="ECO:0007829" key="24">
    <source>
        <dbReference type="PDB" id="8CUA"/>
    </source>
</evidence>
<evidence type="ECO:0007829" key="25">
    <source>
        <dbReference type="PDB" id="8CV2"/>
    </source>
</evidence>
<gene>
    <name evidence="17" type="primary">SLC1A1</name>
    <name type="synonym">EAAC1</name>
    <name evidence="14" type="synonym">EAAT3</name>
    <name evidence="15" type="synonym">HEAAC1</name>
</gene>
<reference key="1">
    <citation type="journal article" date="1994" name="Brain Res.">
        <title>Neuron-specific human glutamate transporter: molecular cloning, characterization and expression in human brain.</title>
        <authorList>
            <person name="Shashidharan P."/>
            <person name="Huntley G.W."/>
            <person name="Meyer T."/>
            <person name="Morrison J.H."/>
            <person name="Plaitakis A."/>
        </authorList>
    </citation>
    <scope>NUCLEOTIDE SEQUENCE [MRNA]</scope>
    <scope>TISSUE SPECIFICITY</scope>
    <source>
        <tissue>Brain</tissue>
    </source>
</reference>
<reference key="2">
    <citation type="journal article" date="1994" name="J. Biol. Chem.">
        <title>The neuronal and epithelial human high affinity glutamate transporter. Insights into structure and mechanism of transport.</title>
        <authorList>
            <person name="Kanai Y."/>
            <person name="Stelzner M."/>
            <person name="Nussberger S."/>
            <person name="Khawaja S."/>
            <person name="Hebert S.C."/>
            <person name="Smith C.P."/>
            <person name="Hediger M.A."/>
        </authorList>
    </citation>
    <scope>NUCLEOTIDE SEQUENCE [MRNA]</scope>
    <scope>FUNCTION</scope>
    <scope>SUBCELLULAR LOCATION</scope>
    <scope>TISSUE SPECIFICITY</scope>
    <scope>TRANSPORTER ACTIVITY</scope>
    <scope>BIOPHYSICOCHEMICAL PROPERTIES</scope>
</reference>
<reference key="3">
    <citation type="journal article" date="1994" name="J. Neurosci.">
        <title>Functional comparisons of three glutamate transporter subtypes cloned from human motor cortex.</title>
        <authorList>
            <person name="Arriza J.L."/>
            <person name="Fairman W.A."/>
            <person name="Wendy A."/>
            <person name="Wadiche J.I."/>
            <person name="Murdoch G.H."/>
            <person name="Kavanaugh M.P."/>
            <person name="Amara S.G."/>
        </authorList>
    </citation>
    <scope>NUCLEOTIDE SEQUENCE [MRNA]</scope>
    <scope>FUNCTION</scope>
    <scope>SUBCELLULAR LOCATION</scope>
    <scope>TISSUE SPECIFICITY</scope>
    <scope>TRANSPORTER ACTIVITY</scope>
    <scope>BIOPHYSICOCHEMICAL PROPERTIES</scope>
    <source>
        <tissue>Brain cortex</tissue>
    </source>
</reference>
<reference key="4">
    <citation type="journal article" date="2001" name="Mol. Psychiatry">
        <title>Genomic organization of the SLC1A1/EAAC1 gene and mutation screening in early-onset obsessive-compulsive disorder.</title>
        <authorList>
            <person name="Veenstra-VanderWeele J."/>
            <person name="Kim S.J."/>
            <person name="Gonen D."/>
            <person name="Hanna G.L."/>
            <person name="Leventhal B.L."/>
            <person name="Cook E.H. Jr."/>
        </authorList>
    </citation>
    <scope>NUCLEOTIDE SEQUENCE [GENOMIC DNA]</scope>
</reference>
<reference key="5">
    <citation type="submission" date="1997-10" db="EMBL/GenBank/DDBJ databases">
        <title>A glutamate transporter related to EAAT3 from human brain.</title>
        <authorList>
            <person name="Yasuda-Kamatani Y."/>
        </authorList>
    </citation>
    <scope>NUCLEOTIDE SEQUENCE [GENOMIC DNA]</scope>
    <source>
        <tissue>Brain</tissue>
    </source>
</reference>
<reference key="6">
    <citation type="journal article" date="2004" name="Nature">
        <title>DNA sequence and analysis of human chromosome 9.</title>
        <authorList>
            <person name="Humphray S.J."/>
            <person name="Oliver K."/>
            <person name="Hunt A.R."/>
            <person name="Plumb R.W."/>
            <person name="Loveland J.E."/>
            <person name="Howe K.L."/>
            <person name="Andrews T.D."/>
            <person name="Searle S."/>
            <person name="Hunt S.E."/>
            <person name="Scott C.E."/>
            <person name="Jones M.C."/>
            <person name="Ainscough R."/>
            <person name="Almeida J.P."/>
            <person name="Ambrose K.D."/>
            <person name="Ashwell R.I.S."/>
            <person name="Babbage A.K."/>
            <person name="Babbage S."/>
            <person name="Bagguley C.L."/>
            <person name="Bailey J."/>
            <person name="Banerjee R."/>
            <person name="Barker D.J."/>
            <person name="Barlow K.F."/>
            <person name="Bates K."/>
            <person name="Beasley H."/>
            <person name="Beasley O."/>
            <person name="Bird C.P."/>
            <person name="Bray-Allen S."/>
            <person name="Brown A.J."/>
            <person name="Brown J.Y."/>
            <person name="Burford D."/>
            <person name="Burrill W."/>
            <person name="Burton J."/>
            <person name="Carder C."/>
            <person name="Carter N.P."/>
            <person name="Chapman J.C."/>
            <person name="Chen Y."/>
            <person name="Clarke G."/>
            <person name="Clark S.Y."/>
            <person name="Clee C.M."/>
            <person name="Clegg S."/>
            <person name="Collier R.E."/>
            <person name="Corby N."/>
            <person name="Crosier M."/>
            <person name="Cummings A.T."/>
            <person name="Davies J."/>
            <person name="Dhami P."/>
            <person name="Dunn M."/>
            <person name="Dutta I."/>
            <person name="Dyer L.W."/>
            <person name="Earthrowl M.E."/>
            <person name="Faulkner L."/>
            <person name="Fleming C.J."/>
            <person name="Frankish A."/>
            <person name="Frankland J.A."/>
            <person name="French L."/>
            <person name="Fricker D.G."/>
            <person name="Garner P."/>
            <person name="Garnett J."/>
            <person name="Ghori J."/>
            <person name="Gilbert J.G.R."/>
            <person name="Glison C."/>
            <person name="Grafham D.V."/>
            <person name="Gribble S."/>
            <person name="Griffiths C."/>
            <person name="Griffiths-Jones S."/>
            <person name="Grocock R."/>
            <person name="Guy J."/>
            <person name="Hall R.E."/>
            <person name="Hammond S."/>
            <person name="Harley J.L."/>
            <person name="Harrison E.S.I."/>
            <person name="Hart E.A."/>
            <person name="Heath P.D."/>
            <person name="Henderson C.D."/>
            <person name="Hopkins B.L."/>
            <person name="Howard P.J."/>
            <person name="Howden P.J."/>
            <person name="Huckle E."/>
            <person name="Johnson C."/>
            <person name="Johnson D."/>
            <person name="Joy A.A."/>
            <person name="Kay M."/>
            <person name="Keenan S."/>
            <person name="Kershaw J.K."/>
            <person name="Kimberley A.M."/>
            <person name="King A."/>
            <person name="Knights A."/>
            <person name="Laird G.K."/>
            <person name="Langford C."/>
            <person name="Lawlor S."/>
            <person name="Leongamornlert D.A."/>
            <person name="Leversha M."/>
            <person name="Lloyd C."/>
            <person name="Lloyd D.M."/>
            <person name="Lovell J."/>
            <person name="Martin S."/>
            <person name="Mashreghi-Mohammadi M."/>
            <person name="Matthews L."/>
            <person name="McLaren S."/>
            <person name="McLay K.E."/>
            <person name="McMurray A."/>
            <person name="Milne S."/>
            <person name="Nickerson T."/>
            <person name="Nisbett J."/>
            <person name="Nordsiek G."/>
            <person name="Pearce A.V."/>
            <person name="Peck A.I."/>
            <person name="Porter K.M."/>
            <person name="Pandian R."/>
            <person name="Pelan S."/>
            <person name="Phillimore B."/>
            <person name="Povey S."/>
            <person name="Ramsey Y."/>
            <person name="Rand V."/>
            <person name="Scharfe M."/>
            <person name="Sehra H.K."/>
            <person name="Shownkeen R."/>
            <person name="Sims S.K."/>
            <person name="Skuce C.D."/>
            <person name="Smith M."/>
            <person name="Steward C.A."/>
            <person name="Swarbreck D."/>
            <person name="Sycamore N."/>
            <person name="Tester J."/>
            <person name="Thorpe A."/>
            <person name="Tracey A."/>
            <person name="Tromans A."/>
            <person name="Thomas D.W."/>
            <person name="Wall M."/>
            <person name="Wallis J.M."/>
            <person name="West A.P."/>
            <person name="Whitehead S.L."/>
            <person name="Willey D.L."/>
            <person name="Williams S.A."/>
            <person name="Wilming L."/>
            <person name="Wray P.W."/>
            <person name="Young L."/>
            <person name="Ashurst J.L."/>
            <person name="Coulson A."/>
            <person name="Blocker H."/>
            <person name="Durbin R.M."/>
            <person name="Sulston J.E."/>
            <person name="Hubbard T."/>
            <person name="Jackson M.J."/>
            <person name="Bentley D.R."/>
            <person name="Beck S."/>
            <person name="Rogers J."/>
            <person name="Dunham I."/>
        </authorList>
    </citation>
    <scope>NUCLEOTIDE SEQUENCE [LARGE SCALE GENOMIC DNA]</scope>
</reference>
<reference key="7">
    <citation type="journal article" date="2004" name="Genome Res.">
        <title>The status, quality, and expansion of the NIH full-length cDNA project: the Mammalian Gene Collection (MGC).</title>
        <authorList>
            <consortium name="The MGC Project Team"/>
        </authorList>
    </citation>
    <scope>NUCLEOTIDE SEQUENCE [LARGE SCALE MRNA]</scope>
    <source>
        <tissue>Brain</tissue>
    </source>
</reference>
<reference key="8">
    <citation type="submission" date="1997-12" db="EMBL/GenBank/DDBJ databases">
        <authorList>
            <person name="Rome S."/>
            <person name="Mertani H.C."/>
            <person name="Lee K.O."/>
            <person name="Lobie P.E."/>
            <person name="Tome D."/>
        </authorList>
    </citation>
    <scope>NUCLEOTIDE SEQUENCE [MRNA] OF 268-446</scope>
    <source>
        <tissue>Placenta</tissue>
    </source>
</reference>
<reference key="9">
    <citation type="journal article" date="1996" name="Nature">
        <title>Flux coupling in a neuronal glutamate transporter.</title>
        <authorList>
            <person name="Zerangue N."/>
            <person name="Kavanaugh M.P."/>
        </authorList>
    </citation>
    <scope>FUNCTION</scope>
    <scope>SUBCELLULAR LOCATION</scope>
</reference>
<reference key="10">
    <citation type="journal article" date="2016" name="J. Membr. Biol.">
        <title>Caveolin-1 Sensitivity of Excitatory Amino Acid Transporters EAAT1, EAAT2, EAAT3, and EAAT4.</title>
        <authorList>
            <person name="Abousaab A."/>
            <person name="Warsi J."/>
            <person name="Elvira B."/>
            <person name="Lang F."/>
        </authorList>
    </citation>
    <scope>FUNCTION</scope>
    <scope>SUBCELLULAR LOCATION</scope>
    <scope>TRANSPORTER ACTIVITY</scope>
    <scope>BIOPHYSICOCHEMICAL PROPERTIES</scope>
</reference>
<reference evidence="18 19 20 21" key="11">
    <citation type="journal article" date="2021" name="Sci. Adv.">
        <title>Cryo-EM structures of excitatory amino acid transporter 3 visualize coupled substrate, sodium, and proton binding and transport.</title>
        <authorList>
            <person name="Qiu B."/>
            <person name="Matthies D."/>
            <person name="Fortea E."/>
            <person name="Yu Z."/>
            <person name="Boudker O."/>
        </authorList>
    </citation>
    <scope>STRUCTURE BY ELECTRON MICROSCOPY (2.85 ANGSTROMS) IN COMPLEX WITH SODIUM AND L-ASPARTATE</scope>
    <scope>FUNCTION</scope>
    <scope>TRANSPORTER ACTIVITY</scope>
    <scope>BIOPHYSICOCHEMICAL PROPERTIES</scope>
    <scope>SUBUNIT</scope>
</reference>
<reference key="12">
    <citation type="journal article" date="2011" name="Biol. Psychiatry">
        <title>Copy number variants for schizophrenia and related psychotic disorders in Oceanic Palau: risk and transmission in extended pedigrees.</title>
        <authorList>
            <person name="Melhem N."/>
            <person name="Middleton F."/>
            <person name="McFadden K."/>
            <person name="Klei L."/>
            <person name="Faraone S.V."/>
            <person name="Vinogradov S."/>
            <person name="Tiobech J."/>
            <person name="Yano V."/>
            <person name="Kuartei S."/>
            <person name="Roeder K."/>
            <person name="Byerley W."/>
            <person name="Devlin B."/>
            <person name="Myles-Worsley M."/>
        </authorList>
    </citation>
    <scope>INVOLVEMENT IN SCZD18</scope>
</reference>
<reference key="13">
    <citation type="journal article" date="2013" name="Am. J. Med. Genet. B Neuropsychiatr. Genet.">
        <title>Deletion at the SLC1A1 glutamate transporter gene co-segregates with schizophrenia and bipolar schizoaffective disorder in a 5-generation family.</title>
        <authorList>
            <person name="Myles-Worsley M."/>
            <person name="Tiobech J."/>
            <person name="Browning S.R."/>
            <person name="Korn J."/>
            <person name="Goodman S."/>
            <person name="Gentile K."/>
            <person name="Melhem N."/>
            <person name="Byerley W."/>
            <person name="Faraone S.V."/>
            <person name="Middleton F.A."/>
        </authorList>
    </citation>
    <scope>INVOLVEMENT IN SCZD18</scope>
</reference>
<reference key="14">
    <citation type="journal article" date="2011" name="J. Clin. Invest.">
        <title>Loss-of-function mutations in the glutamate transporter SLC1A1 cause human dicarboxylic aminoaciduria.</title>
        <authorList>
            <person name="Bailey C.G."/>
            <person name="Ryan R.M."/>
            <person name="Thoeng A.D."/>
            <person name="Ng C."/>
            <person name="King K."/>
            <person name="Vanslambrouck J.M."/>
            <person name="Auray-Blais C."/>
            <person name="Vandenberg R.J."/>
            <person name="Broer S."/>
            <person name="Rasko J.E."/>
        </authorList>
    </citation>
    <scope>VARIANTS DCBXA ILE-395 DEL AND TRP-445</scope>
    <scope>CHARACTERIZATION OF VARIANTS DCBXA ILE-395 DEL AND TRP-445</scope>
    <scope>INVOLVEMENT IN DCBXA</scope>
    <scope>FUNCTION</scope>
    <scope>TRANSPORTER ACTIVITY</scope>
    <scope>SUBCELLULAR LOCATION</scope>
</reference>
<keyword id="KW-0002">3D-structure</keyword>
<keyword id="KW-0029">Amino-acid transport</keyword>
<keyword id="KW-1003">Cell membrane</keyword>
<keyword id="KW-0868">Chloride</keyword>
<keyword id="KW-0225">Disease variant</keyword>
<keyword id="KW-0967">Endosome</keyword>
<keyword id="KW-0325">Glycoprotein</keyword>
<keyword id="KW-0472">Membrane</keyword>
<keyword id="KW-0479">Metal-binding</keyword>
<keyword id="KW-0597">Phosphoprotein</keyword>
<keyword id="KW-0630">Potassium</keyword>
<keyword id="KW-1267">Proteomics identification</keyword>
<keyword id="KW-1185">Reference proteome</keyword>
<keyword id="KW-1211">Schizophrenia</keyword>
<keyword id="KW-0915">Sodium</keyword>
<keyword id="KW-0769">Symport</keyword>
<keyword id="KW-0770">Synapse</keyword>
<keyword id="KW-0771">Synaptosome</keyword>
<keyword id="KW-0812">Transmembrane</keyword>
<keyword id="KW-1133">Transmembrane helix</keyword>
<keyword id="KW-0813">Transport</keyword>
<feature type="chain" id="PRO_0000202065" description="Excitatory amino acid transporter 3">
    <location>
        <begin position="1"/>
        <end position="524"/>
    </location>
</feature>
<feature type="topological domain" description="Cytoplasmic" evidence="16">
    <location>
        <begin position="1"/>
        <end position="18"/>
    </location>
</feature>
<feature type="transmembrane region" description="Helical" evidence="4">
    <location>
        <begin position="19"/>
        <end position="38"/>
    </location>
</feature>
<feature type="topological domain" description="Extracellular" evidence="16">
    <location>
        <begin position="39"/>
        <end position="61"/>
    </location>
</feature>
<feature type="transmembrane region" description="Helical" evidence="4">
    <location>
        <begin position="62"/>
        <end position="82"/>
    </location>
</feature>
<feature type="topological domain" description="Cytoplasmic" evidence="16">
    <location>
        <begin position="83"/>
        <end position="93"/>
    </location>
</feature>
<feature type="transmembrane region" description="Helical" evidence="4">
    <location>
        <begin position="94"/>
        <end position="114"/>
    </location>
</feature>
<feature type="topological domain" description="Extracellular" evidence="16">
    <location>
        <begin position="115"/>
        <end position="205"/>
    </location>
</feature>
<feature type="transmembrane region" description="Helical; Name=4" evidence="1">
    <location>
        <begin position="206"/>
        <end position="229"/>
    </location>
</feature>
<feature type="topological domain" description="Cytoplasmic" evidence="16">
    <location>
        <begin position="230"/>
        <end position="238"/>
    </location>
</feature>
<feature type="transmembrane region" description="Helical; Name=5" evidence="1">
    <location>
        <begin position="239"/>
        <end position="266"/>
    </location>
</feature>
<feature type="topological domain" description="Extracellular" evidence="16">
    <location>
        <begin position="267"/>
        <end position="286"/>
    </location>
</feature>
<feature type="transmembrane region" description="Helical; Name=6" evidence="1">
    <location>
        <begin position="287"/>
        <end position="308"/>
    </location>
</feature>
<feature type="topological domain" description="Cytoplasmic" evidence="16">
    <location>
        <begin position="309"/>
        <end position="313"/>
    </location>
</feature>
<feature type="intramembrane region" description="Discontinuously helical" evidence="1">
    <location>
        <begin position="314"/>
        <end position="344"/>
    </location>
</feature>
<feature type="topological domain" description="Cytoplasmic" evidence="16">
    <location>
        <begin position="345"/>
        <end position="353"/>
    </location>
</feature>
<feature type="transmembrane region" description="Helical; Name=7" evidence="1">
    <location>
        <begin position="354"/>
        <end position="380"/>
    </location>
</feature>
<feature type="topological domain" description="Extracellular" evidence="16">
    <location>
        <begin position="381"/>
        <end position="393"/>
    </location>
</feature>
<feature type="intramembrane region" description="Discontinuously helical" evidence="1">
    <location>
        <begin position="394"/>
        <end position="427"/>
    </location>
</feature>
<feature type="topological domain" description="Extracellular" evidence="16">
    <location>
        <begin position="428"/>
        <end position="440"/>
    </location>
</feature>
<feature type="transmembrane region" description="Helical; Name=8" evidence="1">
    <location>
        <begin position="441"/>
        <end position="462"/>
    </location>
</feature>
<feature type="topological domain" description="Cytoplasmic" evidence="16">
    <location>
        <begin position="463"/>
        <end position="524"/>
    </location>
</feature>
<feature type="binding site" evidence="9 19">
    <location>
        <position position="98"/>
    </location>
    <ligand>
        <name>Na(+)</name>
        <dbReference type="ChEBI" id="CHEBI:29101"/>
        <label>1</label>
    </ligand>
</feature>
<feature type="binding site" evidence="9 19">
    <location>
        <position position="101"/>
    </location>
    <ligand>
        <name>Na(+)</name>
        <dbReference type="ChEBI" id="CHEBI:29101"/>
        <label>1</label>
    </ligand>
</feature>
<feature type="binding site" evidence="9 19">
    <location>
        <position position="102"/>
    </location>
    <ligand>
        <name>Na(+)</name>
        <dbReference type="ChEBI" id="CHEBI:29101"/>
        <label>1</label>
    </ligand>
</feature>
<feature type="binding site" evidence="9 19 20">
    <location>
        <position position="331"/>
    </location>
    <ligand>
        <name>L-aspartate</name>
        <dbReference type="ChEBI" id="CHEBI:29991"/>
    </ligand>
</feature>
<feature type="binding site" evidence="9 19 20">
    <location>
        <position position="333"/>
    </location>
    <ligand>
        <name>L-aspartate</name>
        <dbReference type="ChEBI" id="CHEBI:29991"/>
    </ligand>
</feature>
<feature type="binding site" evidence="9 19">
    <location>
        <position position="362"/>
    </location>
    <ligand>
        <name>Na(+)</name>
        <dbReference type="ChEBI" id="CHEBI:29101"/>
        <label>1</label>
    </ligand>
</feature>
<feature type="binding site" evidence="9 19">
    <location>
        <position position="364"/>
    </location>
    <ligand>
        <name>Na(+)</name>
        <dbReference type="ChEBI" id="CHEBI:29101"/>
        <label>2</label>
    </ligand>
</feature>
<feature type="binding site" evidence="9 19">
    <location>
        <position position="366"/>
    </location>
    <ligand>
        <name>Na(+)</name>
        <dbReference type="ChEBI" id="CHEBI:29101"/>
        <label>1</label>
    </ligand>
</feature>
<feature type="binding site" evidence="9 19">
    <location>
        <position position="368"/>
    </location>
    <ligand>
        <name>Na(+)</name>
        <dbReference type="ChEBI" id="CHEBI:29101"/>
        <label>1</label>
    </ligand>
</feature>
<feature type="binding site" evidence="9 19 20">
    <location>
        <position position="370"/>
    </location>
    <ligand>
        <name>L-aspartate</name>
        <dbReference type="ChEBI" id="CHEBI:29991"/>
    </ligand>
</feature>
<feature type="binding site" evidence="9 19">
    <location>
        <position position="405"/>
    </location>
    <ligand>
        <name>Na(+)</name>
        <dbReference type="ChEBI" id="CHEBI:29101"/>
        <label>2</label>
    </ligand>
</feature>
<feature type="binding site" evidence="9 19">
    <location>
        <position position="406"/>
    </location>
    <ligand>
        <name>Na(+)</name>
        <dbReference type="ChEBI" id="CHEBI:29101"/>
        <label>2</label>
    </ligand>
</feature>
<feature type="binding site" evidence="9 19">
    <location>
        <position position="408"/>
    </location>
    <ligand>
        <name>Na(+)</name>
        <dbReference type="ChEBI" id="CHEBI:29101"/>
        <label>2</label>
    </ligand>
</feature>
<feature type="binding site" evidence="9 20">
    <location>
        <position position="411"/>
    </location>
    <ligand>
        <name>L-aspartate</name>
        <dbReference type="ChEBI" id="CHEBI:29991"/>
    </ligand>
</feature>
<feature type="binding site" evidence="9 19 20">
    <location>
        <position position="447"/>
    </location>
    <ligand>
        <name>L-aspartate</name>
        <dbReference type="ChEBI" id="CHEBI:29991"/>
    </ligand>
</feature>
<feature type="binding site" evidence="9 19">
    <location>
        <position position="448"/>
    </location>
    <ligand>
        <name>L-aspartate</name>
        <dbReference type="ChEBI" id="CHEBI:29991"/>
    </ligand>
</feature>
<feature type="binding site" evidence="9 19 20">
    <location>
        <position position="451"/>
    </location>
    <ligand>
        <name>L-aspartate</name>
        <dbReference type="ChEBI" id="CHEBI:29991"/>
    </ligand>
</feature>
<feature type="binding site" evidence="9 19">
    <location>
        <position position="451"/>
    </location>
    <ligand>
        <name>Na(+)</name>
        <dbReference type="ChEBI" id="CHEBI:29101"/>
        <label>1</label>
    </ligand>
</feature>
<feature type="binding site" evidence="9 19">
    <location>
        <position position="455"/>
    </location>
    <ligand>
        <name>Na(+)</name>
        <dbReference type="ChEBI" id="CHEBI:29101"/>
        <label>1</label>
    </ligand>
</feature>
<feature type="modified residue" description="Phosphoserine" evidence="2">
    <location>
        <position position="517"/>
    </location>
</feature>
<feature type="modified residue" description="Phosphoserine" evidence="2">
    <location>
        <position position="522"/>
    </location>
</feature>
<feature type="glycosylation site" description="N-linked (GlcNAc...) asparagine" evidence="4">
    <location>
        <position position="43"/>
    </location>
</feature>
<feature type="glycosylation site" description="N-linked (GlcNAc...) asparagine" evidence="4">
    <location>
        <position position="178"/>
    </location>
</feature>
<feature type="glycosylation site" description="N-linked (GlcNAc...) asparagine" evidence="4">
    <location>
        <position position="195"/>
    </location>
</feature>
<feature type="sequence variant" id="VAR_023309" description="In dbSNP:rs2229885.">
    <original>A</original>
    <variation>G</variation>
    <location>
        <position position="27"/>
    </location>
</feature>
<feature type="sequence variant" id="VAR_023308" description="In dbSNP:rs2228621.">
    <original>F</original>
    <variation>Y</variation>
    <location>
        <position position="50"/>
    </location>
</feature>
<feature type="sequence variant" id="VAR_071953" description="In DCBXA; inhibits L-glutamate and L-cysteine transport activities." evidence="5">
    <location>
        <position position="395"/>
    </location>
</feature>
<feature type="sequence variant" id="VAR_071954" description="In DCBXA; reduces L-glutamate and L-cysteine transport activities; reduces cell membrane expression; dbSNP:rs587777696." evidence="5">
    <original>R</original>
    <variation>W</variation>
    <location>
        <position position="445"/>
    </location>
</feature>
<feature type="sequence conflict" description="In Ref. 3; AAA50430." evidence="16" ref="3">
    <original>E</original>
    <variation>PS</variation>
    <location>
        <position position="10"/>
    </location>
</feature>
<feature type="sequence conflict" description="In Ref. 7; AAH33040." evidence="16" ref="7">
    <original>L</original>
    <variation>V</variation>
    <location>
        <position position="92"/>
    </location>
</feature>
<feature type="sequence conflict" description="In Ref. 1; AAA68628 and 4; AAC27511." evidence="16" ref="1 4">
    <original>A</original>
    <variation>V</variation>
    <location>
        <position position="94"/>
    </location>
</feature>
<feature type="sequence conflict" description="In Ref. 2; AAA53215." evidence="16" ref="2">
    <original>V</original>
    <variation>L</variation>
    <location>
        <position position="96"/>
    </location>
</feature>
<feature type="sequence conflict" description="In Ref. 2; AAA53215." evidence="16" ref="2">
    <original>K</original>
    <variation>N</variation>
    <location>
        <position position="170"/>
    </location>
</feature>
<feature type="sequence conflict" description="In Ref. 2; AAA53215." evidence="16" ref="2">
    <original>P</original>
    <variation>A</variation>
    <location>
        <position position="172"/>
    </location>
</feature>
<feature type="sequence conflict" description="In Ref. 2; AAA53215." evidence="16" ref="2">
    <original>L</original>
    <variation>H</variation>
    <location>
        <position position="260"/>
    </location>
</feature>
<feature type="sequence conflict" description="In Ref. 1; AAA68628." evidence="16" ref="1">
    <original>R</original>
    <variation>A</variation>
    <location>
        <position position="280"/>
    </location>
</feature>
<feature type="sequence conflict" description="In Ref. 8; AAC25029." evidence="16" ref="8">
    <original>V</original>
    <variation>G</variation>
    <location>
        <position position="376"/>
    </location>
</feature>
<feature type="turn" evidence="24">
    <location>
        <begin position="15"/>
        <end position="18"/>
    </location>
</feature>
<feature type="helix" evidence="24">
    <location>
        <begin position="19"/>
        <end position="41"/>
    </location>
</feature>
<feature type="helix" evidence="24">
    <location>
        <begin position="46"/>
        <end position="52"/>
    </location>
</feature>
<feature type="helix" evidence="24">
    <location>
        <begin position="54"/>
        <end position="65"/>
    </location>
</feature>
<feature type="helix" evidence="24">
    <location>
        <begin position="67"/>
        <end position="80"/>
    </location>
</feature>
<feature type="turn" evidence="24">
    <location>
        <begin position="84"/>
        <end position="86"/>
    </location>
</feature>
<feature type="helix" evidence="24">
    <location>
        <begin position="87"/>
        <end position="116"/>
    </location>
</feature>
<feature type="turn" evidence="25">
    <location>
        <begin position="119"/>
        <end position="121"/>
    </location>
</feature>
<feature type="turn" evidence="25">
    <location>
        <begin position="124"/>
        <end position="126"/>
    </location>
</feature>
<feature type="helix" evidence="24">
    <location>
        <begin position="138"/>
        <end position="149"/>
    </location>
</feature>
<feature type="helix" evidence="24">
    <location>
        <begin position="156"/>
        <end position="158"/>
    </location>
</feature>
<feature type="strand" evidence="24">
    <location>
        <begin position="160"/>
        <end position="167"/>
    </location>
</feature>
<feature type="strand" evidence="24">
    <location>
        <begin position="201"/>
        <end position="209"/>
    </location>
</feature>
<feature type="helix" evidence="24">
    <location>
        <begin position="212"/>
        <end position="226"/>
    </location>
</feature>
<feature type="helix" evidence="24">
    <location>
        <begin position="230"/>
        <end position="232"/>
    </location>
</feature>
<feature type="helix" evidence="24">
    <location>
        <begin position="234"/>
        <end position="269"/>
    </location>
</feature>
<feature type="strand" evidence="22">
    <location>
        <begin position="270"/>
        <end position="272"/>
    </location>
</feature>
<feature type="helix" evidence="24">
    <location>
        <begin position="277"/>
        <end position="281"/>
    </location>
</feature>
<feature type="helix" evidence="24">
    <location>
        <begin position="283"/>
        <end position="298"/>
    </location>
</feature>
<feature type="helix" evidence="24">
    <location>
        <begin position="300"/>
        <end position="308"/>
    </location>
</feature>
<feature type="strand" evidence="23">
    <location>
        <begin position="309"/>
        <end position="311"/>
    </location>
</feature>
<feature type="helix" evidence="24">
    <location>
        <begin position="313"/>
        <end position="318"/>
    </location>
</feature>
<feature type="helix" evidence="24">
    <location>
        <begin position="321"/>
        <end position="330"/>
    </location>
</feature>
<feature type="helix" evidence="24">
    <location>
        <begin position="334"/>
        <end position="336"/>
    </location>
</feature>
<feature type="helix" evidence="24">
    <location>
        <begin position="337"/>
        <end position="346"/>
    </location>
</feature>
<feature type="helix" evidence="24">
    <location>
        <begin position="352"/>
        <end position="365"/>
    </location>
</feature>
<feature type="helix" evidence="24">
    <location>
        <begin position="368"/>
        <end position="384"/>
    </location>
</feature>
<feature type="helix" evidence="24">
    <location>
        <begin position="391"/>
        <end position="404"/>
    </location>
</feature>
<feature type="turn" evidence="24">
    <location>
        <begin position="408"/>
        <end position="410"/>
    </location>
</feature>
<feature type="helix" evidence="24">
    <location>
        <begin position="414"/>
        <end position="426"/>
    </location>
</feature>
<feature type="helix" evidence="24">
    <location>
        <begin position="430"/>
        <end position="432"/>
    </location>
</feature>
<feature type="helix" evidence="24">
    <location>
        <begin position="433"/>
        <end position="437"/>
    </location>
</feature>
<feature type="helix" evidence="24">
    <location>
        <begin position="440"/>
        <end position="465"/>
    </location>
</feature>
<feature type="helix" evidence="24">
    <location>
        <begin position="468"/>
        <end position="476"/>
    </location>
</feature>
<name>EAA3_HUMAN</name>
<comment type="function">
    <text evidence="2 3 5 8 9 10 12 13">Sodium-dependent, high-affinity amino acid transporter that mediates the uptake of L-glutamate and also L-aspartate and D-aspartate (PubMed:21123949, PubMed:26690923, PubMed:33658209, PubMed:7521911, PubMed:7914198, PubMed:8857541). Can also transport L-cysteine (PubMed:21123949). Functions as a symporter that transports one amino acid molecule together with two or three Na(+) ions and one proton, in parallel with the counter-transport of one K(+) ion (PubMed:26690923, PubMed:33658209, PubMed:7521911, PubMed:8857541). Mediates Cl(-) flux that is not coupled to amino acid transport; this avoids the accumulation of negative charges due to aspartate and Na(+) symport (PubMed:26690923, PubMed:8857541). Plays an important role in L-glutamate and L-aspartate reabsorption in renal tubuli (PubMed:21123949). Plays a redundant role in the rapid removal of released glutamate from the synaptic cleft, which is essential for terminating the postsynaptic action of glutamate (By similarity). Contributes to glutathione biosynthesis and protection against oxidative stress via its role in L-glutamate and L-cysteine transport (By similarity). Negatively regulated by ARL6IP5 (By similarity).</text>
</comment>
<comment type="catalytic activity">
    <reaction evidence="10 12">
        <text>K(+)(in) + L-glutamate(out) + 3 Na(+)(out) + H(+)(out) = K(+)(out) + L-glutamate(in) + 3 Na(+)(in) + H(+)(in)</text>
        <dbReference type="Rhea" id="RHEA:70699"/>
        <dbReference type="ChEBI" id="CHEBI:15378"/>
        <dbReference type="ChEBI" id="CHEBI:29101"/>
        <dbReference type="ChEBI" id="CHEBI:29103"/>
        <dbReference type="ChEBI" id="CHEBI:29985"/>
    </reaction>
</comment>
<comment type="catalytic activity">
    <reaction evidence="10">
        <text>K(+)(in) + L-aspartate(out) + 3 Na(+)(out) + H(+)(out) = K(+)(out) + L-aspartate(in) + 3 Na(+)(in) + H(+)(in)</text>
        <dbReference type="Rhea" id="RHEA:70851"/>
        <dbReference type="ChEBI" id="CHEBI:15378"/>
        <dbReference type="ChEBI" id="CHEBI:29101"/>
        <dbReference type="ChEBI" id="CHEBI:29103"/>
        <dbReference type="ChEBI" id="CHEBI:29991"/>
    </reaction>
</comment>
<comment type="catalytic activity">
    <reaction evidence="10">
        <text>D-aspartate(out) + K(+)(in) + 3 Na(+)(out) + H(+)(out) = D-aspartate(in) + K(+)(out) + 3 Na(+)(in) + H(+)(in)</text>
        <dbReference type="Rhea" id="RHEA:71379"/>
        <dbReference type="ChEBI" id="CHEBI:15378"/>
        <dbReference type="ChEBI" id="CHEBI:29101"/>
        <dbReference type="ChEBI" id="CHEBI:29103"/>
        <dbReference type="ChEBI" id="CHEBI:29990"/>
    </reaction>
</comment>
<comment type="catalytic activity">
    <reaction evidence="5">
        <text>K(+)(in) + L-cysteine(out) + 3 Na(+)(out) + H(+)(out) = K(+)(out) + L-cysteine(in) + 3 Na(+)(in) + H(+)(in)</text>
        <dbReference type="Rhea" id="RHEA:82559"/>
        <dbReference type="ChEBI" id="CHEBI:15378"/>
        <dbReference type="ChEBI" id="CHEBI:29101"/>
        <dbReference type="ChEBI" id="CHEBI:29103"/>
        <dbReference type="ChEBI" id="CHEBI:35235"/>
    </reaction>
</comment>
<comment type="biophysicochemical properties">
    <kinetics>
        <KM evidence="8">268 uM for L-glutamate (when transfected in Xenopus laevis oocytes)</KM>
        <KM evidence="12">30 uM for L-glutamate</KM>
        <KM evidence="10">62 uM for L-glutamate</KM>
        <KM evidence="10">47 uM for D-aspartate</KM>
        <KM evidence="10">28 uM for L-glutamate (when transfected in Xenopus laevis oocytes)</KM>
        <KM evidence="10">47 uM for D-aspartate (when transfected in Xenopus laevis oocytes)</KM>
        <KM evidence="9">39 uM for L-aspartate (when transfected in Xenopus laevis oocytes)</KM>
        <KM evidence="10">24 uM for L-aspartate (when transfected in Xenopus laevis oocytes)</KM>
    </kinetics>
</comment>
<comment type="subunit">
    <text evidence="2 9">Homotrimer (PubMed:33658209). Interacts with ARL6IP5. Interacts with RTN2 (via N-terminus); the interaction promotes cell surface expression of SLC1A1. Interacts with SORCS2; this interaction is important for normal expression at the cell membrane (By similarity).</text>
</comment>
<comment type="interaction">
    <interactant intactId="EBI-745376">
        <id>P43005</id>
    </interactant>
    <interactant intactId="EBI-781551">
        <id>Q9Y282</id>
        <label>ERGIC3</label>
    </interactant>
    <organismsDiffer>false</organismsDiffer>
    <experiments>3</experiments>
</comment>
<comment type="interaction">
    <interactant intactId="EBI-745376">
        <id>P43005</id>
    </interactant>
    <interactant intactId="EBI-18304435">
        <id>Q5JX71</id>
        <label>FAM209A</label>
    </interactant>
    <organismsDiffer>false</organismsDiffer>
    <experiments>3</experiments>
</comment>
<comment type="interaction">
    <interactant intactId="EBI-745376">
        <id>P43005</id>
    </interactant>
    <interactant intactId="EBI-12175685">
        <id>Q14802-3</id>
        <label>FXYD3</label>
    </interactant>
    <organismsDiffer>false</organismsDiffer>
    <experiments>3</experiments>
</comment>
<comment type="interaction">
    <interactant intactId="EBI-745376">
        <id>P43005</id>
    </interactant>
    <interactant intactId="EBI-10173166">
        <id>Q5T700</id>
        <label>LDLRAD1</label>
    </interactant>
    <organismsDiffer>false</organismsDiffer>
    <experiments>4</experiments>
</comment>
<comment type="interaction">
    <interactant intactId="EBI-745376">
        <id>P43005</id>
    </interactant>
    <interactant intactId="EBI-2559100">
        <id>O75459</id>
        <label>PAGE1</label>
    </interactant>
    <organismsDiffer>false</organismsDiffer>
    <experiments>3</experiments>
</comment>
<comment type="interaction">
    <interactant intactId="EBI-745376">
        <id>P43005</id>
    </interactant>
    <interactant intactId="EBI-348482">
        <id>Q99942</id>
        <label>RNF5</label>
    </interactant>
    <organismsDiffer>false</organismsDiffer>
    <experiments>6</experiments>
</comment>
<comment type="interaction">
    <interactant intactId="EBI-745376">
        <id>P43005</id>
    </interactant>
    <interactant intactId="EBI-12870360">
        <id>P78382</id>
        <label>SLC35A1</label>
    </interactant>
    <organismsDiffer>false</organismsDiffer>
    <experiments>3</experiments>
</comment>
<comment type="interaction">
    <interactant intactId="EBI-745376">
        <id>P43005</id>
    </interactant>
    <interactant intactId="EBI-10273251">
        <id>Q8TBG9</id>
        <label>SYNPR</label>
    </interactant>
    <organismsDiffer>false</organismsDiffer>
    <experiments>3</experiments>
</comment>
<comment type="interaction">
    <interactant intactId="EBI-745376">
        <id>P43005</id>
    </interactant>
    <interactant intactId="EBI-11724423">
        <id>Q7Z7N9</id>
        <label>TMEM179B</label>
    </interactant>
    <organismsDiffer>false</organismsDiffer>
    <experiments>3</experiments>
</comment>
<comment type="subcellular location">
    <subcellularLocation>
        <location evidence="5 8 10 12 13">Cell membrane</location>
        <topology evidence="1">Multi-pass membrane protein</topology>
    </subcellularLocation>
    <subcellularLocation>
        <location evidence="5">Apical cell membrane</location>
        <topology evidence="1">Multi-pass membrane protein</topology>
    </subcellularLocation>
    <subcellularLocation>
        <location evidence="2">Synapse</location>
        <location evidence="2">Synaptosome</location>
    </subcellularLocation>
    <subcellularLocation>
        <location evidence="2">Early endosome membrane</location>
    </subcellularLocation>
    <subcellularLocation>
        <location evidence="2">Late endosome membrane</location>
    </subcellularLocation>
    <subcellularLocation>
        <location evidence="2">Recycling endosome membrane</location>
    </subcellularLocation>
</comment>
<comment type="tissue specificity">
    <text evidence="10 11 12">Expressed in all tissues tested including liver, muscle, testis, ovary, retinoblastoma cell line, neurons and brain (in which there was dense expression in substantia nigra, red nucleus, hippocampus and in cerebral cortical layers).</text>
</comment>
<comment type="domain">
    <text evidence="1">Contains eight transmembrane regions plus two helical hairpins that dip into the membrane. These helical hairpin structures play an important role in the transport process. The first enters the membrane from the cytoplasmic side, the second one from the extracellular side. During the transport cycle, the regions involved in amino acid transport, and especially the helical hairpins, move vertically by about 15-18 Angstroms, alternating between exposure to the aqueous phase and reinsertion in the lipid bilayer. In contrast, the regions involved in trimerization do not move.</text>
</comment>
<comment type="PTM">
    <text>Glycosylated.</text>
</comment>
<comment type="disease" evidence="5">
    <disease id="DI-04231">
        <name>Dicarboxylic aminoaciduria</name>
        <acronym>DCBXA</acronym>
        <description>An autosomal recessive disorder characterized by abnormal excretion of urinary glutamate and aspartate, resulting from the incomplete reabsorption of anionic amino acids from the glomerular filtrate in the kidney. It can be associated with intellectual disability.</description>
        <dbReference type="MIM" id="222730"/>
    </disease>
    <text>The disease is caused by variants affecting the gene represented in this entry.</text>
</comment>
<comment type="disease" evidence="6 7">
    <disease id="DI-03726">
        <name>Schizophrenia 18</name>
        <acronym>SCZD18</acronym>
        <description>A complex, multifactorial psychotic disorder or group of disorders characterized by disturbances in the form and content of thought (e.g. delusions, hallucinations), in mood (e.g. inappropriate affect), in sense of self and relationship to the external world (e.g. loss of ego boundaries, withdrawal), and in behavior (e.g bizarre or apparently purposeless behavior). Although it affects emotions, it is distinguished from mood disorders in which such disturbances are primary. Similarly, there may be mild impairment of cognitive function, and it is distinguished from the dementias in which disturbed cognitive function is considered primary. Some patients manifest schizophrenic as well as bipolar disorder symptoms and are often given the diagnosis of schizoaffective disorder.</description>
        <dbReference type="MIM" id="615232"/>
    </disease>
    <text evidence="6 7">Disease susceptibility is associated with variants affecting the gene represented in this entry. A deletion at the chromosome 9p24.2 locus, including SLC1A1, has been identified in patients with psychotic disorders (PubMed:21982423). This 84 kb deletion is immediately upstream of the SLC1A1 gene in a regulatory region that contains the full native promoter sequence, extends through exon 1 of the SLC1A1 mRNA, co-segregates with disease in an extended 5-generation pedigree and increases disease risk more than 18-fold for family members (PubMed:23341099).</text>
</comment>
<comment type="similarity">
    <text evidence="16">Belongs to the dicarboxylate/amino acid:cation symporter (DAACS) (TC 2.A.23) family. SLC1A1 subfamily.</text>
</comment>
<organism>
    <name type="scientific">Homo sapiens</name>
    <name type="common">Human</name>
    <dbReference type="NCBI Taxonomy" id="9606"/>
    <lineage>
        <taxon>Eukaryota</taxon>
        <taxon>Metazoa</taxon>
        <taxon>Chordata</taxon>
        <taxon>Craniata</taxon>
        <taxon>Vertebrata</taxon>
        <taxon>Euteleostomi</taxon>
        <taxon>Mammalia</taxon>
        <taxon>Eutheria</taxon>
        <taxon>Euarchontoglires</taxon>
        <taxon>Primates</taxon>
        <taxon>Haplorrhini</taxon>
        <taxon>Catarrhini</taxon>
        <taxon>Hominidae</taxon>
        <taxon>Homo</taxon>
    </lineage>
</organism>
<proteinExistence type="evidence at protein level"/>